<evidence type="ECO:0000255" key="1">
    <source>
        <dbReference type="HAMAP-Rule" id="MF_00966"/>
    </source>
</evidence>
<name>G6PD_NOSP7</name>
<comment type="function">
    <text evidence="1">Catalyzes the oxidation of glucose 6-phosphate to 6-phosphogluconolactone.</text>
</comment>
<comment type="catalytic activity">
    <reaction evidence="1">
        <text>D-glucose 6-phosphate + NADP(+) = 6-phospho-D-glucono-1,5-lactone + NADPH + H(+)</text>
        <dbReference type="Rhea" id="RHEA:15841"/>
        <dbReference type="ChEBI" id="CHEBI:15378"/>
        <dbReference type="ChEBI" id="CHEBI:57783"/>
        <dbReference type="ChEBI" id="CHEBI:57955"/>
        <dbReference type="ChEBI" id="CHEBI:58349"/>
        <dbReference type="ChEBI" id="CHEBI:61548"/>
        <dbReference type="EC" id="1.1.1.49"/>
    </reaction>
</comment>
<comment type="pathway">
    <text evidence="1">Carbohydrate degradation; pentose phosphate pathway; D-ribulose 5-phosphate from D-glucose 6-phosphate (oxidative stage): step 1/3.</text>
</comment>
<comment type="similarity">
    <text evidence="1">Belongs to the glucose-6-phosphate dehydrogenase family.</text>
</comment>
<reference key="1">
    <citation type="journal article" date="1995" name="Plant Physiol.">
        <title>Nucleotide sequence of an operon in Nostoc sp. strain ATCC 29133 encoding four genes of the oxidative pentose phosphate cycle.</title>
        <authorList>
            <person name="Summers M.L."/>
            <person name="Meeks J.C."/>
            <person name="Chu S."/>
            <person name="Wolf R.E. Jr."/>
        </authorList>
    </citation>
    <scope>NUCLEOTIDE SEQUENCE [GENOMIC DNA]</scope>
</reference>
<reference key="2">
    <citation type="journal article" date="2013" name="Plant Physiol.">
        <title>A Nostoc punctiforme Sugar Transporter Necessary to Establish a Cyanobacterium-Plant Symbiosis.</title>
        <authorList>
            <person name="Ekman M."/>
            <person name="Picossi S."/>
            <person name="Campbell E.L."/>
            <person name="Meeks J.C."/>
            <person name="Flores E."/>
        </authorList>
    </citation>
    <scope>NUCLEOTIDE SEQUENCE [LARGE SCALE GENOMIC DNA]</scope>
    <source>
        <strain>ATCC 29133 / PCC 73102</strain>
    </source>
</reference>
<sequence>MVSLLENPLRVGLQQQGMPEPQIIVIFGASGDLTWRKLVPALYKLRRERRIPPETTIVGVARREWSHEYFREQMQKGMEEAHPDVDLGELWQDFSQGLFYSPGDIDNPESYQKLKTLLSELDEKRGTRGNRMFYLSVAPSFFPEAIKQLGSGGMLEDPYKHRLVIEKPFGRDLASAQSLNQVVQKYCKEHQVYRIDHYLGKETVQNLLVFRFANAIFEPLWNRQFVDHVQITVAETVGVEDRAGYYESAGALRDMLQNHLMQLYCLTAMEAPNAMDADSIRTEKVKVLQATRLADVHNLSRSAVRGQYSAGWMKGQAVPGYRTEPGVDPNSTTPTYVAMKFLVDNWRWKGVPFYLRTGKRMPKKVSEIAIHFREVPSRMFQSAAQQTNANILTMRIQPNEGISLRFDVKMPGAEFRTRSVDMDFSYGSFGIQATSDAYDRLFLDCMMGDQTLFTRADEVEAAWQVVTPALSVWDAPADPTTIPQYEAGTWEPEQAELLINQDGRRWRRL</sequence>
<dbReference type="EC" id="1.1.1.49" evidence="1"/>
<dbReference type="EMBL" id="L32796">
    <property type="protein sequence ID" value="AAA50770.1"/>
    <property type="molecule type" value="Genomic_DNA"/>
</dbReference>
<dbReference type="EMBL" id="CP001037">
    <property type="protein sequence ID" value="ACC82404.1"/>
    <property type="molecule type" value="Genomic_DNA"/>
</dbReference>
<dbReference type="RefSeq" id="WP_012410371.1">
    <property type="nucleotide sequence ID" value="NC_010628.1"/>
</dbReference>
<dbReference type="SMR" id="P48848"/>
<dbReference type="STRING" id="63737.Npun_F4025"/>
<dbReference type="EnsemblBacteria" id="ACC82404">
    <property type="protein sequence ID" value="ACC82404"/>
    <property type="gene ID" value="Npun_F4025"/>
</dbReference>
<dbReference type="KEGG" id="npu:Npun_F4025"/>
<dbReference type="eggNOG" id="COG0364">
    <property type="taxonomic scope" value="Bacteria"/>
</dbReference>
<dbReference type="HOGENOM" id="CLU_013524_5_0_3"/>
<dbReference type="OrthoDB" id="9802739at2"/>
<dbReference type="PhylomeDB" id="P48848"/>
<dbReference type="UniPathway" id="UPA00115">
    <property type="reaction ID" value="UER00408"/>
</dbReference>
<dbReference type="Proteomes" id="UP000001191">
    <property type="component" value="Chromosome"/>
</dbReference>
<dbReference type="GO" id="GO:0005829">
    <property type="term" value="C:cytosol"/>
    <property type="evidence" value="ECO:0007669"/>
    <property type="project" value="TreeGrafter"/>
</dbReference>
<dbReference type="GO" id="GO:0004345">
    <property type="term" value="F:glucose-6-phosphate dehydrogenase activity"/>
    <property type="evidence" value="ECO:0007669"/>
    <property type="project" value="UniProtKB-UniRule"/>
</dbReference>
<dbReference type="GO" id="GO:0050661">
    <property type="term" value="F:NADP binding"/>
    <property type="evidence" value="ECO:0007669"/>
    <property type="project" value="UniProtKB-UniRule"/>
</dbReference>
<dbReference type="GO" id="GO:0006006">
    <property type="term" value="P:glucose metabolic process"/>
    <property type="evidence" value="ECO:0007669"/>
    <property type="project" value="UniProtKB-KW"/>
</dbReference>
<dbReference type="GO" id="GO:0009051">
    <property type="term" value="P:pentose-phosphate shunt, oxidative branch"/>
    <property type="evidence" value="ECO:0007669"/>
    <property type="project" value="TreeGrafter"/>
</dbReference>
<dbReference type="Gene3D" id="3.30.360.10">
    <property type="entry name" value="Dihydrodipicolinate Reductase, domain 2"/>
    <property type="match status" value="1"/>
</dbReference>
<dbReference type="Gene3D" id="3.40.50.720">
    <property type="entry name" value="NAD(P)-binding Rossmann-like Domain"/>
    <property type="match status" value="1"/>
</dbReference>
<dbReference type="HAMAP" id="MF_00966">
    <property type="entry name" value="G6PD"/>
    <property type="match status" value="1"/>
</dbReference>
<dbReference type="InterPro" id="IPR001282">
    <property type="entry name" value="G6P_DH"/>
</dbReference>
<dbReference type="InterPro" id="IPR019796">
    <property type="entry name" value="G6P_DH_AS"/>
</dbReference>
<dbReference type="InterPro" id="IPR022675">
    <property type="entry name" value="G6P_DH_C"/>
</dbReference>
<dbReference type="InterPro" id="IPR022674">
    <property type="entry name" value="G6P_DH_NAD-bd"/>
</dbReference>
<dbReference type="InterPro" id="IPR036291">
    <property type="entry name" value="NAD(P)-bd_dom_sf"/>
</dbReference>
<dbReference type="NCBIfam" id="TIGR00871">
    <property type="entry name" value="zwf"/>
    <property type="match status" value="1"/>
</dbReference>
<dbReference type="PANTHER" id="PTHR23429:SF0">
    <property type="entry name" value="GLUCOSE-6-PHOSPHATE 1-DEHYDROGENASE"/>
    <property type="match status" value="1"/>
</dbReference>
<dbReference type="PANTHER" id="PTHR23429">
    <property type="entry name" value="GLUCOSE-6-PHOSPHATE 1-DEHYDROGENASE G6PD"/>
    <property type="match status" value="1"/>
</dbReference>
<dbReference type="Pfam" id="PF02781">
    <property type="entry name" value="G6PD_C"/>
    <property type="match status" value="1"/>
</dbReference>
<dbReference type="Pfam" id="PF00479">
    <property type="entry name" value="G6PD_N"/>
    <property type="match status" value="1"/>
</dbReference>
<dbReference type="PIRSF" id="PIRSF000110">
    <property type="entry name" value="G6PD"/>
    <property type="match status" value="1"/>
</dbReference>
<dbReference type="PRINTS" id="PR00079">
    <property type="entry name" value="G6PDHDRGNASE"/>
</dbReference>
<dbReference type="SUPFAM" id="SSF55347">
    <property type="entry name" value="Glyceraldehyde-3-phosphate dehydrogenase-like, C-terminal domain"/>
    <property type="match status" value="1"/>
</dbReference>
<dbReference type="SUPFAM" id="SSF51735">
    <property type="entry name" value="NAD(P)-binding Rossmann-fold domains"/>
    <property type="match status" value="1"/>
</dbReference>
<dbReference type="PROSITE" id="PS00069">
    <property type="entry name" value="G6P_DEHYDROGENASE"/>
    <property type="match status" value="1"/>
</dbReference>
<feature type="chain" id="PRO_0000068130" description="Glucose-6-phosphate 1-dehydrogenase">
    <location>
        <begin position="1"/>
        <end position="509"/>
    </location>
</feature>
<feature type="active site" description="Proton acceptor" evidence="1">
    <location>
        <position position="259"/>
    </location>
</feature>
<feature type="binding site" evidence="1">
    <location>
        <position position="62"/>
    </location>
    <ligand>
        <name>NADP(+)</name>
        <dbReference type="ChEBI" id="CHEBI:58349"/>
    </ligand>
</feature>
<feature type="binding site" evidence="1">
    <location>
        <begin position="104"/>
        <end position="105"/>
    </location>
    <ligand>
        <name>NADP(+)</name>
        <dbReference type="ChEBI" id="CHEBI:58349"/>
    </ligand>
</feature>
<feature type="binding site" evidence="1">
    <location>
        <position position="167"/>
    </location>
    <ligand>
        <name>NADP(+)</name>
        <dbReference type="ChEBI" id="CHEBI:58349"/>
    </ligand>
</feature>
<feature type="binding site" evidence="1">
    <location>
        <position position="197"/>
    </location>
    <ligand>
        <name>substrate</name>
    </ligand>
</feature>
<feature type="binding site" evidence="1">
    <location>
        <position position="201"/>
    </location>
    <ligand>
        <name>substrate</name>
    </ligand>
</feature>
<feature type="binding site" evidence="1">
    <location>
        <position position="235"/>
    </location>
    <ligand>
        <name>substrate</name>
    </ligand>
</feature>
<feature type="binding site" evidence="1">
    <location>
        <position position="254"/>
    </location>
    <ligand>
        <name>substrate</name>
    </ligand>
</feature>
<feature type="binding site" evidence="1">
    <location>
        <position position="359"/>
    </location>
    <ligand>
        <name>substrate</name>
    </ligand>
</feature>
<feature type="binding site" evidence="1">
    <location>
        <position position="364"/>
    </location>
    <ligand>
        <name>substrate</name>
    </ligand>
</feature>
<organism>
    <name type="scientific">Nostoc punctiforme (strain ATCC 29133 / PCC 73102)</name>
    <dbReference type="NCBI Taxonomy" id="63737"/>
    <lineage>
        <taxon>Bacteria</taxon>
        <taxon>Bacillati</taxon>
        <taxon>Cyanobacteriota</taxon>
        <taxon>Cyanophyceae</taxon>
        <taxon>Nostocales</taxon>
        <taxon>Nostocaceae</taxon>
        <taxon>Nostoc</taxon>
    </lineage>
</organism>
<keyword id="KW-0119">Carbohydrate metabolism</keyword>
<keyword id="KW-0313">Glucose metabolism</keyword>
<keyword id="KW-0521">NADP</keyword>
<keyword id="KW-0560">Oxidoreductase</keyword>
<keyword id="KW-1185">Reference proteome</keyword>
<proteinExistence type="inferred from homology"/>
<protein>
    <recommendedName>
        <fullName evidence="1">Glucose-6-phosphate 1-dehydrogenase</fullName>
        <shortName evidence="1">G6PD</shortName>
        <ecNumber evidence="1">1.1.1.49</ecNumber>
    </recommendedName>
</protein>
<accession>P48848</accession>
<accession>B2J6J9</accession>
<gene>
    <name evidence="1" type="primary">zwf</name>
    <name type="ordered locus">Npun_F4025</name>
</gene>